<sequence>MVEKKTSVRSQDPGQRRVLDRAARQRRINRQLEALENDNFQDDPHAGLPQLGKRLPQFDDDADTGKKKKKTRGDHFKLRFRKNFQALLEEQNLSVAEGPNYLTACAGPPSRPQRPFCAVCGFPSPYTCVSCGARYCTVRCLGTHQETRCLKWTV</sequence>
<comment type="function">
    <text evidence="1 2">Plays a role in chromatin remodeling by promoting the incorporation of histone variant H2AZ1/H2A.Z into the genome to regulate gene expression (By similarity). Promotes SRCAP complex-mediated deposition of histone variant H2AZ1 to lymphoid fate regulator genes, enhancing lymphoid lineage commitment (By similarity). Recruited to the promoter of the transcriptional activator MYOG at the early stages of muscle differentiation where it mediates binding of histone H2AZ1 to chromatin and induces muscle-specific gene expression (By similarity). Maintains hematopoietic stem cell (HSC) quiescence by determining the chromatin accessibility at distal enhancers of HSC quiescence genes such as PTEN, FSTL1 and KLF4, enhancing deposition of H2AZ1 to promote their sustained transcription and restricting PI3K-AKT signaling inhibition (By similarity). Plays a role in intestinal stem cell maintenance by promoting H2AZ1 deposition at the transcription start sites of genes involved in intestinal stem cell fate determination including LGR5, TGFB1 and TGFBR2, thereby contributing to gene transcription (By similarity). Promotes phosphorylation of the H2AZ1 chaperone VPS72/YL1 which enhances the interaction between HZAZ1 and VPS72 (By similarity). Regulates the entry of male germ cells into meiosis by controlling histone H2AZ1 deposition which facilitates the expression of meiotic genes such as MEIOSIN, leading to the initiation of meiosis (By similarity). Required for postnatal heart function through its role in maintenance of cardiac Ca(2+) homeostasis by modulating the expression of Ca(2+)-regulating proteins CASQ1 and ATP2A2/SERCA2A via deposition of histone H2AZ1 at their promoters (By similarity). During embryonic heart development, required for mitochondrial maturation and oxidative metabolism by functioning through H2AZ1 deposition to activate transcription of metabolic genes and is also required to maintain the stability of the respiratory complex (By similarity). In neural cells, increases deposition of the H2AZ1 histone variant and promotes neurite growth (By similarity). Plays a role in TP53/p53-mediated apoptosis induction by stimulating the transcriptional activation of several proapoptotic p53 target genes such as PMAIP1/NOXA and BBC3/PUMA (By similarity). Mediates cell cycle arrest induced in response to gamma-irradiation by enhancing recruitment of TP53/p53 to the promoter of the cell cycle inhibitor CDKN1A, leading to its transcriptional activation (By similarity). Recruited to the promoter of cyclin-dependent kinase CDK6 and inhibits its transcription, possibly by decreasing the acetylation level of histone H4, leading to cell cycle arrest at the G1 phase (By similarity). Plays a role in lens fiber cell differentiation by regulating the expression of cell cycle regulator CDKN1A/p21Cip1 (By similarity). Binds to transcriptional repressor NR1D2 and relieves it of its inhibitory effect on the transcription of apolipoprotein APOC3 without affecting its DNA-binding activity (By similarity).</text>
</comment>
<comment type="subunit">
    <text evidence="1 2">Component of the chromatin-remodeling SRCAP complex composed of at least SRCAP, DMAP1, RUVBL1, RUVBL2, ACTL6A, YEATS4, ACTR6 and ZNHIT1 (By similarity). Interacts with MAPK11 and MAPK14 (By similarity). Interacts with NR1D1 and NR2D2 (By similarity). Interacts (via HIT-type zinc finger) with the RUVBL1/RUVBL2 complex in the presence of ADP (By similarity). Interacts with histone deacetylase HDAC1 (By similarity). Interacts with histone H2AZ1; the interaction results in recruitment of H2AZ1 to the MYOG promoter region (By similarity). Interacts with PCID2; the interaction results in inhibition of SRCAP complex activity, preventing the deposition of histone variant H2Az1 to lymphoid fate regulator genes and restricting lymphoid lineage commitment (By similarity).</text>
</comment>
<comment type="subcellular location">
    <subcellularLocation>
        <location evidence="1">Nucleus</location>
    </subcellularLocation>
</comment>
<comment type="PTM">
    <text evidence="1">Phosphorylated on Thr by MAPK11 or MAPK14 (By similarity). Phosphorylation is required for MYOG induction, for deposition of histone H2AZ1 at the MYOG promoter and for SRCAP complex integrity (By similarity).</text>
</comment>
<comment type="similarity">
    <text evidence="6">Belongs to the ZNHIT1 family.</text>
</comment>
<accession>Q24JY4</accession>
<dbReference type="EMBL" id="BC114191">
    <property type="protein sequence ID" value="AAI14192.1"/>
    <property type="molecule type" value="mRNA"/>
</dbReference>
<dbReference type="RefSeq" id="NP_001039650.1">
    <property type="nucleotide sequence ID" value="NM_001046185.2"/>
</dbReference>
<dbReference type="SMR" id="Q24JY4"/>
<dbReference type="FunCoup" id="Q24JY4">
    <property type="interactions" value="2036"/>
</dbReference>
<dbReference type="STRING" id="9913.ENSBTAP00000060443"/>
<dbReference type="PaxDb" id="9913-ENSBTAP00000000448"/>
<dbReference type="Ensembl" id="ENSBTAT00000000448.4">
    <property type="protein sequence ID" value="ENSBTAP00000000448.3"/>
    <property type="gene ID" value="ENSBTAG00000000343.5"/>
</dbReference>
<dbReference type="GeneID" id="514997"/>
<dbReference type="KEGG" id="bta:514997"/>
<dbReference type="CTD" id="10467"/>
<dbReference type="VEuPathDB" id="HostDB:ENSBTAG00000000343"/>
<dbReference type="VGNC" id="VGNC:37358">
    <property type="gene designation" value="ZNHIT1"/>
</dbReference>
<dbReference type="eggNOG" id="KOG3362">
    <property type="taxonomic scope" value="Eukaryota"/>
</dbReference>
<dbReference type="GeneTree" id="ENSGT00390000018426"/>
<dbReference type="HOGENOM" id="CLU_106918_2_1_1"/>
<dbReference type="InParanoid" id="Q24JY4"/>
<dbReference type="OMA" id="CIPCGAR"/>
<dbReference type="OrthoDB" id="74807at2759"/>
<dbReference type="TreeFam" id="TF314330"/>
<dbReference type="Proteomes" id="UP000009136">
    <property type="component" value="Chromosome 25"/>
</dbReference>
<dbReference type="Bgee" id="ENSBTAG00000000343">
    <property type="expression patterns" value="Expressed in retina and 108 other cell types or tissues"/>
</dbReference>
<dbReference type="GO" id="GO:0000812">
    <property type="term" value="C:Swr1 complex"/>
    <property type="evidence" value="ECO:0000318"/>
    <property type="project" value="GO_Central"/>
</dbReference>
<dbReference type="GO" id="GO:0042393">
    <property type="term" value="F:histone binding"/>
    <property type="evidence" value="ECO:0007669"/>
    <property type="project" value="Ensembl"/>
</dbReference>
<dbReference type="GO" id="GO:0042826">
    <property type="term" value="F:histone deacetylase binding"/>
    <property type="evidence" value="ECO:0007669"/>
    <property type="project" value="Ensembl"/>
</dbReference>
<dbReference type="GO" id="GO:0031491">
    <property type="term" value="F:nucleosome binding"/>
    <property type="evidence" value="ECO:0000318"/>
    <property type="project" value="GO_Central"/>
</dbReference>
<dbReference type="GO" id="GO:0008270">
    <property type="term" value="F:zinc ion binding"/>
    <property type="evidence" value="ECO:0007669"/>
    <property type="project" value="UniProtKB-KW"/>
</dbReference>
<dbReference type="GO" id="GO:0055074">
    <property type="term" value="P:calcium ion homeostasis"/>
    <property type="evidence" value="ECO:0000250"/>
    <property type="project" value="UniProtKB"/>
</dbReference>
<dbReference type="GO" id="GO:0006338">
    <property type="term" value="P:chromatin remodeling"/>
    <property type="evidence" value="ECO:0000250"/>
    <property type="project" value="UniProtKB"/>
</dbReference>
<dbReference type="GO" id="GO:0003015">
    <property type="term" value="P:heart process"/>
    <property type="evidence" value="ECO:0000250"/>
    <property type="project" value="UniProtKB"/>
</dbReference>
<dbReference type="GO" id="GO:0061484">
    <property type="term" value="P:hematopoietic stem cell homeostasis"/>
    <property type="evidence" value="ECO:0007669"/>
    <property type="project" value="Ensembl"/>
</dbReference>
<dbReference type="GO" id="GO:0036335">
    <property type="term" value="P:intestinal stem cell homeostasis"/>
    <property type="evidence" value="ECO:0000250"/>
    <property type="project" value="UniProtKB"/>
</dbReference>
<dbReference type="GO" id="GO:0042692">
    <property type="term" value="P:muscle cell differentiation"/>
    <property type="evidence" value="ECO:0007669"/>
    <property type="project" value="Ensembl"/>
</dbReference>
<dbReference type="GO" id="GO:0070317">
    <property type="term" value="P:negative regulation of G0 to G1 transition"/>
    <property type="evidence" value="ECO:0007669"/>
    <property type="project" value="Ensembl"/>
</dbReference>
<dbReference type="GO" id="GO:0000122">
    <property type="term" value="P:negative regulation of transcription by RNA polymerase II"/>
    <property type="evidence" value="ECO:0007669"/>
    <property type="project" value="Ensembl"/>
</dbReference>
<dbReference type="GO" id="GO:0043517">
    <property type="term" value="P:positive regulation of DNA damage response, signal transduction by p53 class mediator"/>
    <property type="evidence" value="ECO:0000250"/>
    <property type="project" value="UniProtKB"/>
</dbReference>
<dbReference type="GO" id="GO:1905458">
    <property type="term" value="P:positive regulation of lymphoid progenitor cell differentiation"/>
    <property type="evidence" value="ECO:0000250"/>
    <property type="project" value="UniProtKB"/>
</dbReference>
<dbReference type="GO" id="GO:0060261">
    <property type="term" value="P:positive regulation of transcription initiation by RNA polymerase II"/>
    <property type="evidence" value="ECO:0000250"/>
    <property type="project" value="UniProtKB"/>
</dbReference>
<dbReference type="GO" id="GO:0042129">
    <property type="term" value="P:regulation of T cell proliferation"/>
    <property type="evidence" value="ECO:0007669"/>
    <property type="project" value="Ensembl"/>
</dbReference>
<dbReference type="GO" id="GO:0045815">
    <property type="term" value="P:transcription initiation-coupled chromatin remodeling"/>
    <property type="evidence" value="ECO:0007669"/>
    <property type="project" value="Ensembl"/>
</dbReference>
<dbReference type="CDD" id="cd21437">
    <property type="entry name" value="zf-HIT_ZNHIT1_like"/>
    <property type="match status" value="1"/>
</dbReference>
<dbReference type="Gene3D" id="3.30.60.190">
    <property type="match status" value="1"/>
</dbReference>
<dbReference type="InterPro" id="IPR039723">
    <property type="entry name" value="Vps71/ZNHIT1"/>
</dbReference>
<dbReference type="InterPro" id="IPR007529">
    <property type="entry name" value="Znf_HIT"/>
</dbReference>
<dbReference type="PANTHER" id="PTHR13093">
    <property type="entry name" value="ZINC FINGER HIT DOMAIN CONTAINING PROTEIN 1"/>
    <property type="match status" value="1"/>
</dbReference>
<dbReference type="Pfam" id="PF04438">
    <property type="entry name" value="zf-HIT"/>
    <property type="match status" value="1"/>
</dbReference>
<dbReference type="SUPFAM" id="SSF144232">
    <property type="entry name" value="HIT/MYND zinc finger-like"/>
    <property type="match status" value="1"/>
</dbReference>
<dbReference type="PROSITE" id="PS51083">
    <property type="entry name" value="ZF_HIT"/>
    <property type="match status" value="1"/>
</dbReference>
<name>ZNHI1_BOVIN</name>
<keyword id="KW-0156">Chromatin regulator</keyword>
<keyword id="KW-0175">Coiled coil</keyword>
<keyword id="KW-0479">Metal-binding</keyword>
<keyword id="KW-0539">Nucleus</keyword>
<keyword id="KW-0597">Phosphoprotein</keyword>
<keyword id="KW-1185">Reference proteome</keyword>
<keyword id="KW-0862">Zinc</keyword>
<keyword id="KW-0863">Zinc-finger</keyword>
<feature type="chain" id="PRO_0000239846" description="Zinc finger HIT domain-containing protein 1">
    <location>
        <begin position="1"/>
        <end position="154"/>
    </location>
</feature>
<feature type="zinc finger region" description="HIT-type" evidence="4">
    <location>
        <begin position="117"/>
        <end position="149"/>
    </location>
</feature>
<feature type="region of interest" description="Disordered" evidence="5">
    <location>
        <begin position="1"/>
        <end position="72"/>
    </location>
</feature>
<feature type="region of interest" description="Interaction with NR1D2" evidence="1">
    <location>
        <begin position="72"/>
        <end position="110"/>
    </location>
</feature>
<feature type="coiled-coil region" evidence="3">
    <location>
        <begin position="23"/>
        <end position="39"/>
    </location>
</feature>
<feature type="short sequence motif" description="Nuclear localization signal" evidence="1">
    <location>
        <begin position="38"/>
        <end position="47"/>
    </location>
</feature>
<feature type="compositionally biased region" description="Basic and acidic residues" evidence="5">
    <location>
        <begin position="14"/>
        <end position="23"/>
    </location>
</feature>
<feature type="binding site" evidence="4">
    <location>
        <position position="117"/>
    </location>
    <ligand>
        <name>Zn(2+)</name>
        <dbReference type="ChEBI" id="CHEBI:29105"/>
        <label>1</label>
    </ligand>
</feature>
<feature type="binding site" evidence="4">
    <location>
        <position position="120"/>
    </location>
    <ligand>
        <name>Zn(2+)</name>
        <dbReference type="ChEBI" id="CHEBI:29105"/>
        <label>1</label>
    </ligand>
</feature>
<feature type="binding site" evidence="4">
    <location>
        <position position="128"/>
    </location>
    <ligand>
        <name>Zn(2+)</name>
        <dbReference type="ChEBI" id="CHEBI:29105"/>
        <label>2</label>
    </ligand>
</feature>
<feature type="binding site" evidence="4">
    <location>
        <position position="131"/>
    </location>
    <ligand>
        <name>Zn(2+)</name>
        <dbReference type="ChEBI" id="CHEBI:29105"/>
        <label>2</label>
    </ligand>
</feature>
<feature type="binding site" evidence="4">
    <location>
        <position position="136"/>
    </location>
    <ligand>
        <name>Zn(2+)</name>
        <dbReference type="ChEBI" id="CHEBI:29105"/>
        <label>1</label>
    </ligand>
</feature>
<feature type="binding site" evidence="4">
    <location>
        <position position="140"/>
    </location>
    <ligand>
        <name>Zn(2+)</name>
        <dbReference type="ChEBI" id="CHEBI:29105"/>
        <label>1</label>
    </ligand>
</feature>
<feature type="binding site" evidence="4">
    <location>
        <position position="144"/>
    </location>
    <ligand>
        <name>Zn(2+)</name>
        <dbReference type="ChEBI" id="CHEBI:29105"/>
        <label>2</label>
    </ligand>
</feature>
<feature type="binding site" evidence="4">
    <location>
        <position position="149"/>
    </location>
    <ligand>
        <name>Zn(2+)</name>
        <dbReference type="ChEBI" id="CHEBI:29105"/>
        <label>2</label>
    </ligand>
</feature>
<feature type="modified residue" description="Phosphothreonine; by MAPK11 and MAPK14" evidence="1">
    <location>
        <position position="103"/>
    </location>
</feature>
<evidence type="ECO:0000250" key="1">
    <source>
        <dbReference type="UniProtKB" id="O43257"/>
    </source>
</evidence>
<evidence type="ECO:0000250" key="2">
    <source>
        <dbReference type="UniProtKB" id="Q8R331"/>
    </source>
</evidence>
<evidence type="ECO:0000255" key="3"/>
<evidence type="ECO:0000255" key="4">
    <source>
        <dbReference type="PROSITE-ProRule" id="PRU00453"/>
    </source>
</evidence>
<evidence type="ECO:0000256" key="5">
    <source>
        <dbReference type="SAM" id="MobiDB-lite"/>
    </source>
</evidence>
<evidence type="ECO:0000305" key="6"/>
<reference key="1">
    <citation type="submission" date="2006-02" db="EMBL/GenBank/DDBJ databases">
        <authorList>
            <consortium name="NIH - Mammalian Gene Collection (MGC) project"/>
        </authorList>
    </citation>
    <scope>NUCLEOTIDE SEQUENCE [LARGE SCALE MRNA]</scope>
    <source>
        <strain>Crossbred X Angus</strain>
        <tissue>Liver</tissue>
    </source>
</reference>
<organism>
    <name type="scientific">Bos taurus</name>
    <name type="common">Bovine</name>
    <dbReference type="NCBI Taxonomy" id="9913"/>
    <lineage>
        <taxon>Eukaryota</taxon>
        <taxon>Metazoa</taxon>
        <taxon>Chordata</taxon>
        <taxon>Craniata</taxon>
        <taxon>Vertebrata</taxon>
        <taxon>Euteleostomi</taxon>
        <taxon>Mammalia</taxon>
        <taxon>Eutheria</taxon>
        <taxon>Laurasiatheria</taxon>
        <taxon>Artiodactyla</taxon>
        <taxon>Ruminantia</taxon>
        <taxon>Pecora</taxon>
        <taxon>Bovidae</taxon>
        <taxon>Bovinae</taxon>
        <taxon>Bos</taxon>
    </lineage>
</organism>
<proteinExistence type="evidence at transcript level"/>
<protein>
    <recommendedName>
        <fullName>Zinc finger HIT domain-containing protein 1</fullName>
    </recommendedName>
    <alternativeName>
        <fullName evidence="1">p18 Hamlet</fullName>
    </alternativeName>
</protein>
<gene>
    <name type="primary">ZNHIT1</name>
</gene>